<feature type="chain" id="PRO_0000063717" description="Keratin, type II cytoskeletal 3">
    <location>
        <begin position="1"/>
        <end position="629"/>
    </location>
</feature>
<feature type="domain" description="IF rod" evidence="2">
    <location>
        <begin position="183"/>
        <end position="498"/>
    </location>
</feature>
<feature type="region of interest" description="Head">
    <location>
        <begin position="1"/>
        <end position="182"/>
    </location>
</feature>
<feature type="region of interest" description="Coil 1A">
    <location>
        <begin position="183"/>
        <end position="218"/>
    </location>
</feature>
<feature type="region of interest" description="Linker 1">
    <location>
        <begin position="219"/>
        <end position="239"/>
    </location>
</feature>
<feature type="region of interest" description="Coil 1B">
    <location>
        <begin position="240"/>
        <end position="331"/>
    </location>
</feature>
<feature type="region of interest" description="Linker 12">
    <location>
        <begin position="332"/>
        <end position="355"/>
    </location>
</feature>
<feature type="region of interest" description="Coil 2">
    <location>
        <begin position="356"/>
        <end position="494"/>
    </location>
</feature>
<feature type="region of interest" description="Tail">
    <location>
        <begin position="495"/>
        <end position="629"/>
    </location>
</feature>
<feature type="region of interest" description="Disordered" evidence="3">
    <location>
        <begin position="603"/>
        <end position="629"/>
    </location>
</feature>
<feature type="compositionally biased region" description="Polar residues" evidence="3">
    <location>
        <begin position="618"/>
        <end position="629"/>
    </location>
</feature>
<feature type="modified residue" description="Phosphoserine" evidence="1">
    <location>
        <position position="13"/>
    </location>
</feature>
<feature type="modified residue" description="Phosphoserine" evidence="1">
    <location>
        <position position="62"/>
    </location>
</feature>
<feature type="modified residue" description="N6,N6-dimethyllysine" evidence="1">
    <location>
        <position position="281"/>
    </location>
</feature>
<feature type="modified residue" description="Phosphoserine" evidence="1">
    <location>
        <position position="349"/>
    </location>
</feature>
<proteinExistence type="evidence at transcript level"/>
<protein>
    <recommendedName>
        <fullName>Keratin, type II cytoskeletal 3</fullName>
    </recommendedName>
    <alternativeName>
        <fullName>Cytokeratin-3</fullName>
        <shortName>CK-3</shortName>
    </alternativeName>
    <alternativeName>
        <fullName>Keratin-3</fullName>
        <shortName>K3</shortName>
    </alternativeName>
    <alternativeName>
        <fullName>Type-II keratin Kb3</fullName>
    </alternativeName>
</protein>
<sequence>MNRQVCKTSGGGSLSFSGRSAVVSGSGGGGSSSRMSCVARSVAAGGGASGFRGGAGGFGSRSLYNLGGHKSISMSVAAGGSRAGGFGGGRSICGSGFGGGLGGGLGGGLGSGFGGGFGGGFGGAGAFGGAGGFGGAGGFGGPGGFGGPGGFPGGIQEVTVNQSLLQPLNVEIDPQIGQVRAQEREQIKTLNNKFASFIDKVRFLEQQNKVLETKWELLQRQGPNSVTGTNNLEPLFENRINYLRSYLDSIVGERGRLDSELRSMQDLVEDFKKKYEDEINKRTAAENEFVTLKKDVDAAYMNKVELQAKVDSLMDEINFLRTLYDAELSQMQSHVSDMSVVLSMDNNRSLDLDSIIAEVRAQYEDIAQRSRAEAEAWYQTKLGELQTTAGRHGDDLRSTKNEIAEINRMIQRLRNEIENVKKQNASLQTAIAEAEQRGELALKDANAKLQELQAALQQAKDDLARLLRDYQELMNVKLALDVEIATYRKLLEGEESRMSGECQSAVSISVVNSSSTTSAAAGGYGGGYGGGYGGGFGVGGGAGSGFGRGGGSGFGGGSGLGGGSGFGGGSGLGGGSGLGGGSIGFSVGSSGFGSGSGGRIGVSGGGFSSGSSSRGSSVKFSQSSQRYSR</sequence>
<organism>
    <name type="scientific">Oryctolagus cuniculus</name>
    <name type="common">Rabbit</name>
    <dbReference type="NCBI Taxonomy" id="9986"/>
    <lineage>
        <taxon>Eukaryota</taxon>
        <taxon>Metazoa</taxon>
        <taxon>Chordata</taxon>
        <taxon>Craniata</taxon>
        <taxon>Vertebrata</taxon>
        <taxon>Euteleostomi</taxon>
        <taxon>Mammalia</taxon>
        <taxon>Eutheria</taxon>
        <taxon>Euarchontoglires</taxon>
        <taxon>Glires</taxon>
        <taxon>Lagomorpha</taxon>
        <taxon>Leporidae</taxon>
        <taxon>Oryctolagus</taxon>
    </lineage>
</organism>
<accession>Q29426</accession>
<keyword id="KW-0175">Coiled coil</keyword>
<keyword id="KW-0403">Intermediate filament</keyword>
<keyword id="KW-0416">Keratin</keyword>
<keyword id="KW-0488">Methylation</keyword>
<keyword id="KW-0597">Phosphoprotein</keyword>
<keyword id="KW-1185">Reference proteome</keyword>
<name>K2C3_RABIT</name>
<reference key="1">
    <citation type="journal article" date="1993" name="J. Cell Sci.">
        <title>A 300 bp 5'-upstream sequence of a differentiation-dependent rabbit K3 keratin gene can serve as a keratinocyte-specific promoter.</title>
        <authorList>
            <person name="Wu R.L."/>
            <person name="Galvin S."/>
            <person name="Wu S.K."/>
            <person name="Xu C."/>
            <person name="Blumenberg M."/>
            <person name="Sun T.T."/>
        </authorList>
    </citation>
    <scope>NUCLEOTIDE SEQUENCE [GENOMIC DNA]</scope>
    <scope>TISSUE SPECIFICITY</scope>
</reference>
<reference key="2">
    <citation type="journal article" date="2003" name="Invest. Ophthalmol. Vis. Sci.">
        <title>Stromal niche controls the plasticity of limbal and corneal epithelial differentiation in a rabbit model of recombined tissue.</title>
        <authorList>
            <person name="Espana E.M."/>
            <person name="Kawakita T."/>
            <person name="Romano A."/>
            <person name="Di Pascuale M."/>
            <person name="Smiddy R."/>
            <person name="Liu C.Y."/>
            <person name="Tseng S.C."/>
        </authorList>
    </citation>
    <scope>TISSUE SPECIFICITY</scope>
</reference>
<dbReference type="EMBL" id="S65740">
    <property type="protein sequence ID" value="AAB28323.1"/>
    <property type="molecule type" value="Genomic_DNA"/>
</dbReference>
<dbReference type="EMBL" id="X74371">
    <property type="protein sequence ID" value="CAA52409.1"/>
    <property type="molecule type" value="Genomic_DNA"/>
</dbReference>
<dbReference type="PIR" id="S42629">
    <property type="entry name" value="S42629"/>
</dbReference>
<dbReference type="RefSeq" id="XP_002711051.1">
    <property type="nucleotide sequence ID" value="XM_002711005.2"/>
</dbReference>
<dbReference type="SMR" id="Q29426"/>
<dbReference type="FunCoup" id="Q29426">
    <property type="interactions" value="11"/>
</dbReference>
<dbReference type="STRING" id="9986.ENSOCUP00000008551"/>
<dbReference type="PaxDb" id="9986-ENSOCUP00000008551"/>
<dbReference type="Ensembl" id="ENSOCUT00000009929.3">
    <property type="protein sequence ID" value="ENSOCUP00000008551.3"/>
    <property type="gene ID" value="ENSOCUG00000029194.2"/>
</dbReference>
<dbReference type="GeneID" id="100353668"/>
<dbReference type="KEGG" id="ocu:100353668"/>
<dbReference type="CTD" id="3850"/>
<dbReference type="eggNOG" id="ENOG502QURK">
    <property type="taxonomic scope" value="Eukaryota"/>
</dbReference>
<dbReference type="GeneTree" id="ENSGT00940000162629"/>
<dbReference type="InParanoid" id="Q29426"/>
<dbReference type="OrthoDB" id="2441647at2759"/>
<dbReference type="Proteomes" id="UP000001811">
    <property type="component" value="Chromosome 4"/>
</dbReference>
<dbReference type="Bgee" id="ENSOCUG00000029194">
    <property type="expression patterns" value="Expressed in skin of back and 3 other cell types or tissues"/>
</dbReference>
<dbReference type="ExpressionAtlas" id="Q29426">
    <property type="expression patterns" value="baseline"/>
</dbReference>
<dbReference type="GO" id="GO:0005615">
    <property type="term" value="C:extracellular space"/>
    <property type="evidence" value="ECO:0007669"/>
    <property type="project" value="TreeGrafter"/>
</dbReference>
<dbReference type="GO" id="GO:0045095">
    <property type="term" value="C:keratin filament"/>
    <property type="evidence" value="ECO:0007669"/>
    <property type="project" value="InterPro"/>
</dbReference>
<dbReference type="GO" id="GO:0030280">
    <property type="term" value="F:structural constituent of skin epidermis"/>
    <property type="evidence" value="ECO:0007669"/>
    <property type="project" value="TreeGrafter"/>
</dbReference>
<dbReference type="GO" id="GO:0030855">
    <property type="term" value="P:epithelial cell differentiation"/>
    <property type="evidence" value="ECO:0000314"/>
    <property type="project" value="UniProtKB"/>
</dbReference>
<dbReference type="GO" id="GO:0045104">
    <property type="term" value="P:intermediate filament cytoskeleton organization"/>
    <property type="evidence" value="ECO:0000250"/>
    <property type="project" value="UniProtKB"/>
</dbReference>
<dbReference type="GO" id="GO:0045109">
    <property type="term" value="P:intermediate filament organization"/>
    <property type="evidence" value="ECO:0007669"/>
    <property type="project" value="TreeGrafter"/>
</dbReference>
<dbReference type="GO" id="GO:0031424">
    <property type="term" value="P:keratinization"/>
    <property type="evidence" value="ECO:0007669"/>
    <property type="project" value="TreeGrafter"/>
</dbReference>
<dbReference type="FunFam" id="1.20.5.1160:FF:000001">
    <property type="entry name" value="Keratin type II"/>
    <property type="match status" value="1"/>
</dbReference>
<dbReference type="FunFam" id="1.20.5.170:FF:000004">
    <property type="entry name" value="Keratin, type II cytoskeletal 5"/>
    <property type="match status" value="1"/>
</dbReference>
<dbReference type="FunFam" id="1.20.5.500:FF:000001">
    <property type="entry name" value="Type II keratin 23"/>
    <property type="match status" value="1"/>
</dbReference>
<dbReference type="Gene3D" id="1.20.5.170">
    <property type="match status" value="1"/>
</dbReference>
<dbReference type="Gene3D" id="1.20.5.500">
    <property type="entry name" value="Single helix bin"/>
    <property type="match status" value="1"/>
</dbReference>
<dbReference type="Gene3D" id="1.20.5.1160">
    <property type="entry name" value="Vasodilator-stimulated phosphoprotein"/>
    <property type="match status" value="1"/>
</dbReference>
<dbReference type="InterPro" id="IPR018039">
    <property type="entry name" value="IF_conserved"/>
</dbReference>
<dbReference type="InterPro" id="IPR039008">
    <property type="entry name" value="IF_rod_dom"/>
</dbReference>
<dbReference type="InterPro" id="IPR032444">
    <property type="entry name" value="Keratin_2_head"/>
</dbReference>
<dbReference type="InterPro" id="IPR003054">
    <property type="entry name" value="Keratin_II"/>
</dbReference>
<dbReference type="PANTHER" id="PTHR45616">
    <property type="entry name" value="GATA-TYPE DOMAIN-CONTAINING PROTEIN"/>
    <property type="match status" value="1"/>
</dbReference>
<dbReference type="PANTHER" id="PTHR45616:SF38">
    <property type="entry name" value="KERATIN, TYPE II CYTOSKELETAL 3"/>
    <property type="match status" value="1"/>
</dbReference>
<dbReference type="Pfam" id="PF00038">
    <property type="entry name" value="Filament"/>
    <property type="match status" value="1"/>
</dbReference>
<dbReference type="Pfam" id="PF16208">
    <property type="entry name" value="Keratin_2_head"/>
    <property type="match status" value="1"/>
</dbReference>
<dbReference type="PRINTS" id="PR01276">
    <property type="entry name" value="TYPE2KERATIN"/>
</dbReference>
<dbReference type="SMART" id="SM01391">
    <property type="entry name" value="Filament"/>
    <property type="match status" value="1"/>
</dbReference>
<dbReference type="SUPFAM" id="SSF64593">
    <property type="entry name" value="Intermediate filament protein, coiled coil region"/>
    <property type="match status" value="3"/>
</dbReference>
<dbReference type="PROSITE" id="PS00226">
    <property type="entry name" value="IF_ROD_1"/>
    <property type="match status" value="1"/>
</dbReference>
<dbReference type="PROSITE" id="PS51842">
    <property type="entry name" value="IF_ROD_2"/>
    <property type="match status" value="1"/>
</dbReference>
<gene>
    <name type="primary">KRT3</name>
</gene>
<comment type="subunit">
    <text>Heterotetramer of two type I and two type II keratins. Keratin-3 associates with keratin-12.</text>
</comment>
<comment type="tissue specificity">
    <text evidence="4 5">Cornea specific. Expressed in the basal cells of corneal epithelium and stroma. Also expressed in esophageal epithelium.</text>
</comment>
<comment type="miscellaneous">
    <text>There are two types of cytoskeletal and microfibrillar keratin: I (acidic; 40-55 kDa) and II (neutral to basic; 56-70 kDa).</text>
</comment>
<comment type="similarity">
    <text evidence="2">Belongs to the intermediate filament family.</text>
</comment>
<evidence type="ECO:0000250" key="1">
    <source>
        <dbReference type="UniProtKB" id="P04264"/>
    </source>
</evidence>
<evidence type="ECO:0000255" key="2">
    <source>
        <dbReference type="PROSITE-ProRule" id="PRU01188"/>
    </source>
</evidence>
<evidence type="ECO:0000256" key="3">
    <source>
        <dbReference type="SAM" id="MobiDB-lite"/>
    </source>
</evidence>
<evidence type="ECO:0000269" key="4">
    <source>
    </source>
</evidence>
<evidence type="ECO:0000269" key="5">
    <source>
    </source>
</evidence>